<dbReference type="EMBL" id="CP000747">
    <property type="protein sequence ID" value="ACG77649.1"/>
    <property type="molecule type" value="Genomic_DNA"/>
</dbReference>
<dbReference type="RefSeq" id="WP_012521793.1">
    <property type="nucleotide sequence ID" value="NC_011144.1"/>
</dbReference>
<dbReference type="SMR" id="B4R8M2"/>
<dbReference type="STRING" id="450851.PHZ_c1235"/>
<dbReference type="KEGG" id="pzu:PHZ_c1235"/>
<dbReference type="eggNOG" id="COG0091">
    <property type="taxonomic scope" value="Bacteria"/>
</dbReference>
<dbReference type="HOGENOM" id="CLU_083987_3_0_5"/>
<dbReference type="OrthoDB" id="9805969at2"/>
<dbReference type="Proteomes" id="UP000001868">
    <property type="component" value="Chromosome"/>
</dbReference>
<dbReference type="GO" id="GO:0022625">
    <property type="term" value="C:cytosolic large ribosomal subunit"/>
    <property type="evidence" value="ECO:0007669"/>
    <property type="project" value="TreeGrafter"/>
</dbReference>
<dbReference type="GO" id="GO:0019843">
    <property type="term" value="F:rRNA binding"/>
    <property type="evidence" value="ECO:0007669"/>
    <property type="project" value="UniProtKB-UniRule"/>
</dbReference>
<dbReference type="GO" id="GO:0003735">
    <property type="term" value="F:structural constituent of ribosome"/>
    <property type="evidence" value="ECO:0007669"/>
    <property type="project" value="InterPro"/>
</dbReference>
<dbReference type="GO" id="GO:0006412">
    <property type="term" value="P:translation"/>
    <property type="evidence" value="ECO:0007669"/>
    <property type="project" value="UniProtKB-UniRule"/>
</dbReference>
<dbReference type="CDD" id="cd00336">
    <property type="entry name" value="Ribosomal_L22"/>
    <property type="match status" value="1"/>
</dbReference>
<dbReference type="Gene3D" id="3.90.470.10">
    <property type="entry name" value="Ribosomal protein L22/L17"/>
    <property type="match status" value="1"/>
</dbReference>
<dbReference type="HAMAP" id="MF_01331_B">
    <property type="entry name" value="Ribosomal_uL22_B"/>
    <property type="match status" value="1"/>
</dbReference>
<dbReference type="InterPro" id="IPR001063">
    <property type="entry name" value="Ribosomal_uL22"/>
</dbReference>
<dbReference type="InterPro" id="IPR005727">
    <property type="entry name" value="Ribosomal_uL22_bac/chlpt-type"/>
</dbReference>
<dbReference type="InterPro" id="IPR047867">
    <property type="entry name" value="Ribosomal_uL22_bac/org-type"/>
</dbReference>
<dbReference type="InterPro" id="IPR036394">
    <property type="entry name" value="Ribosomal_uL22_sf"/>
</dbReference>
<dbReference type="NCBIfam" id="TIGR01044">
    <property type="entry name" value="rplV_bact"/>
    <property type="match status" value="1"/>
</dbReference>
<dbReference type="PANTHER" id="PTHR13501">
    <property type="entry name" value="CHLOROPLAST 50S RIBOSOMAL PROTEIN L22-RELATED"/>
    <property type="match status" value="1"/>
</dbReference>
<dbReference type="PANTHER" id="PTHR13501:SF8">
    <property type="entry name" value="LARGE RIBOSOMAL SUBUNIT PROTEIN UL22M"/>
    <property type="match status" value="1"/>
</dbReference>
<dbReference type="Pfam" id="PF00237">
    <property type="entry name" value="Ribosomal_L22"/>
    <property type="match status" value="1"/>
</dbReference>
<dbReference type="SUPFAM" id="SSF54843">
    <property type="entry name" value="Ribosomal protein L22"/>
    <property type="match status" value="1"/>
</dbReference>
<gene>
    <name evidence="1" type="primary">rplV</name>
    <name type="ordered locus">PHZ_c1235</name>
</gene>
<organism>
    <name type="scientific">Phenylobacterium zucineum (strain HLK1)</name>
    <dbReference type="NCBI Taxonomy" id="450851"/>
    <lineage>
        <taxon>Bacteria</taxon>
        <taxon>Pseudomonadati</taxon>
        <taxon>Pseudomonadota</taxon>
        <taxon>Alphaproteobacteria</taxon>
        <taxon>Caulobacterales</taxon>
        <taxon>Caulobacteraceae</taxon>
        <taxon>Phenylobacterium</taxon>
    </lineage>
</organism>
<keyword id="KW-1185">Reference proteome</keyword>
<keyword id="KW-0687">Ribonucleoprotein</keyword>
<keyword id="KW-0689">Ribosomal protein</keyword>
<keyword id="KW-0694">RNA-binding</keyword>
<keyword id="KW-0699">rRNA-binding</keyword>
<proteinExistence type="inferred from homology"/>
<sequence>MAKQAKARRLAGIEAMAKVRTLRTSPRKLNLVAQSIRGLKVQRALNELEFSHKRIARDVRKALYSAISNAENNHNLDIDNLVVAEAFVGKNLIMKRFHARARGRASRIEKPFSEITIVVREQGEAA</sequence>
<comment type="function">
    <text evidence="1">This protein binds specifically to 23S rRNA; its binding is stimulated by other ribosomal proteins, e.g. L4, L17, and L20. It is important during the early stages of 50S assembly. It makes multiple contacts with different domains of the 23S rRNA in the assembled 50S subunit and ribosome (By similarity).</text>
</comment>
<comment type="function">
    <text evidence="1">The globular domain of the protein is located near the polypeptide exit tunnel on the outside of the subunit, while an extended beta-hairpin is found that lines the wall of the exit tunnel in the center of the 70S ribosome.</text>
</comment>
<comment type="subunit">
    <text evidence="1">Part of the 50S ribosomal subunit.</text>
</comment>
<comment type="similarity">
    <text evidence="1">Belongs to the universal ribosomal protein uL22 family.</text>
</comment>
<evidence type="ECO:0000255" key="1">
    <source>
        <dbReference type="HAMAP-Rule" id="MF_01331"/>
    </source>
</evidence>
<evidence type="ECO:0000305" key="2"/>
<protein>
    <recommendedName>
        <fullName evidence="1">Large ribosomal subunit protein uL22</fullName>
    </recommendedName>
    <alternativeName>
        <fullName evidence="2">50S ribosomal protein L22</fullName>
    </alternativeName>
</protein>
<reference key="1">
    <citation type="journal article" date="2008" name="BMC Genomics">
        <title>Complete genome of Phenylobacterium zucineum - a novel facultative intracellular bacterium isolated from human erythroleukemia cell line K562.</title>
        <authorList>
            <person name="Luo Y."/>
            <person name="Xu X."/>
            <person name="Ding Z."/>
            <person name="Liu Z."/>
            <person name="Zhang B."/>
            <person name="Yan Z."/>
            <person name="Sun J."/>
            <person name="Hu S."/>
            <person name="Hu X."/>
        </authorList>
    </citation>
    <scope>NUCLEOTIDE SEQUENCE [LARGE SCALE GENOMIC DNA]</scope>
    <source>
        <strain>HLK1</strain>
    </source>
</reference>
<name>RL22_PHEZH</name>
<accession>B4R8M2</accession>
<feature type="chain" id="PRO_1000142292" description="Large ribosomal subunit protein uL22">
    <location>
        <begin position="1"/>
        <end position="126"/>
    </location>
</feature>